<evidence type="ECO:0000255" key="1">
    <source>
        <dbReference type="HAMAP-Rule" id="MF_01394"/>
    </source>
</evidence>
<reference key="1">
    <citation type="journal article" date="2007" name="PLoS Genet.">
        <title>Patterns and implications of gene gain and loss in the evolution of Prochlorococcus.</title>
        <authorList>
            <person name="Kettler G.C."/>
            <person name="Martiny A.C."/>
            <person name="Huang K."/>
            <person name="Zucker J."/>
            <person name="Coleman M.L."/>
            <person name="Rodrigue S."/>
            <person name="Chen F."/>
            <person name="Lapidus A."/>
            <person name="Ferriera S."/>
            <person name="Johnson J."/>
            <person name="Steglich C."/>
            <person name="Church G.M."/>
            <person name="Richardson P."/>
            <person name="Chisholm S.W."/>
        </authorList>
    </citation>
    <scope>NUCLEOTIDE SEQUENCE [LARGE SCALE GENOMIC DNA]</scope>
    <source>
        <strain>NATL1A</strain>
    </source>
</reference>
<feature type="chain" id="PRO_0000362727" description="NAD(P)H-quinone oxidoreductase subunit 3">
    <location>
        <begin position="1"/>
        <end position="120"/>
    </location>
</feature>
<feature type="transmembrane region" description="Helical" evidence="1">
    <location>
        <begin position="6"/>
        <end position="26"/>
    </location>
</feature>
<feature type="transmembrane region" description="Helical" evidence="1">
    <location>
        <begin position="64"/>
        <end position="84"/>
    </location>
</feature>
<feature type="transmembrane region" description="Helical" evidence="1">
    <location>
        <begin position="89"/>
        <end position="109"/>
    </location>
</feature>
<keyword id="KW-0472">Membrane</keyword>
<keyword id="KW-0520">NAD</keyword>
<keyword id="KW-0521">NADP</keyword>
<keyword id="KW-0618">Plastoquinone</keyword>
<keyword id="KW-0874">Quinone</keyword>
<keyword id="KW-0793">Thylakoid</keyword>
<keyword id="KW-1278">Translocase</keyword>
<keyword id="KW-0812">Transmembrane</keyword>
<keyword id="KW-1133">Transmembrane helix</keyword>
<keyword id="KW-0813">Transport</keyword>
<proteinExistence type="inferred from homology"/>
<sequence length="120" mass="13581">MFSLQGYEYFLGFLLISGAVPILALTTNKLIAPKSKAGERQLTYESGMEPIGGAWIQFNIRYYMFALVFVIFDVETVFLYPWAVAFHKLGLLAFIEALVFITILVVALAYAWRKGALEWS</sequence>
<name>NU3C_PROM1</name>
<organism>
    <name type="scientific">Prochlorococcus marinus (strain NATL1A)</name>
    <dbReference type="NCBI Taxonomy" id="167555"/>
    <lineage>
        <taxon>Bacteria</taxon>
        <taxon>Bacillati</taxon>
        <taxon>Cyanobacteriota</taxon>
        <taxon>Cyanophyceae</taxon>
        <taxon>Synechococcales</taxon>
        <taxon>Prochlorococcaceae</taxon>
        <taxon>Prochlorococcus</taxon>
    </lineage>
</organism>
<gene>
    <name evidence="1" type="primary">ndhC</name>
    <name type="ordered locus">NATL1_03741</name>
</gene>
<comment type="function">
    <text evidence="1">NDH-1 shuttles electrons from an unknown electron donor, via FMN and iron-sulfur (Fe-S) centers, to quinones in the respiratory and/or the photosynthetic chain. The immediate electron acceptor for the enzyme in this species is believed to be plastoquinone. Couples the redox reaction to proton translocation, and thus conserves the redox energy in a proton gradient. Cyanobacterial NDH-1 also plays a role in inorganic carbon-concentration.</text>
</comment>
<comment type="catalytic activity">
    <reaction evidence="1">
        <text>a plastoquinone + NADH + (n+1) H(+)(in) = a plastoquinol + NAD(+) + n H(+)(out)</text>
        <dbReference type="Rhea" id="RHEA:42608"/>
        <dbReference type="Rhea" id="RHEA-COMP:9561"/>
        <dbReference type="Rhea" id="RHEA-COMP:9562"/>
        <dbReference type="ChEBI" id="CHEBI:15378"/>
        <dbReference type="ChEBI" id="CHEBI:17757"/>
        <dbReference type="ChEBI" id="CHEBI:57540"/>
        <dbReference type="ChEBI" id="CHEBI:57945"/>
        <dbReference type="ChEBI" id="CHEBI:62192"/>
    </reaction>
</comment>
<comment type="catalytic activity">
    <reaction evidence="1">
        <text>a plastoquinone + NADPH + (n+1) H(+)(in) = a plastoquinol + NADP(+) + n H(+)(out)</text>
        <dbReference type="Rhea" id="RHEA:42612"/>
        <dbReference type="Rhea" id="RHEA-COMP:9561"/>
        <dbReference type="Rhea" id="RHEA-COMP:9562"/>
        <dbReference type="ChEBI" id="CHEBI:15378"/>
        <dbReference type="ChEBI" id="CHEBI:17757"/>
        <dbReference type="ChEBI" id="CHEBI:57783"/>
        <dbReference type="ChEBI" id="CHEBI:58349"/>
        <dbReference type="ChEBI" id="CHEBI:62192"/>
    </reaction>
</comment>
<comment type="subunit">
    <text evidence="1">NDH-1 can be composed of about 15 different subunits; different subcomplexes with different compositions have been identified which probably have different functions.</text>
</comment>
<comment type="subcellular location">
    <subcellularLocation>
        <location evidence="1">Cellular thylakoid membrane</location>
        <topology evidence="1">Multi-pass membrane protein</topology>
    </subcellularLocation>
</comment>
<comment type="similarity">
    <text evidence="1">Belongs to the complex I subunit 3 family.</text>
</comment>
<protein>
    <recommendedName>
        <fullName evidence="1">NAD(P)H-quinone oxidoreductase subunit 3</fullName>
        <ecNumber evidence="1">7.1.1.-</ecNumber>
    </recommendedName>
    <alternativeName>
        <fullName evidence="1">NAD(P)H dehydrogenase subunit 3</fullName>
    </alternativeName>
    <alternativeName>
        <fullName evidence="1">NADH-plastoquinone oxidoreductase subunit 3</fullName>
    </alternativeName>
    <alternativeName>
        <fullName evidence="1">NDH-1 subunit 3</fullName>
        <shortName evidence="1">NDH-C</shortName>
    </alternativeName>
</protein>
<accession>A2C0C8</accession>
<dbReference type="EC" id="7.1.1.-" evidence="1"/>
<dbReference type="EMBL" id="CP000553">
    <property type="protein sequence ID" value="ABM74938.1"/>
    <property type="molecule type" value="Genomic_DNA"/>
</dbReference>
<dbReference type="RefSeq" id="WP_011294293.1">
    <property type="nucleotide sequence ID" value="NC_008819.1"/>
</dbReference>
<dbReference type="SMR" id="A2C0C8"/>
<dbReference type="KEGG" id="pme:NATL1_03741"/>
<dbReference type="eggNOG" id="COG0838">
    <property type="taxonomic scope" value="Bacteria"/>
</dbReference>
<dbReference type="HOGENOM" id="CLU_119549_1_1_3"/>
<dbReference type="Proteomes" id="UP000002592">
    <property type="component" value="Chromosome"/>
</dbReference>
<dbReference type="GO" id="GO:0030964">
    <property type="term" value="C:NADH dehydrogenase complex"/>
    <property type="evidence" value="ECO:0007669"/>
    <property type="project" value="TreeGrafter"/>
</dbReference>
<dbReference type="GO" id="GO:0031676">
    <property type="term" value="C:plasma membrane-derived thylakoid membrane"/>
    <property type="evidence" value="ECO:0007669"/>
    <property type="project" value="UniProtKB-SubCell"/>
</dbReference>
<dbReference type="GO" id="GO:0008137">
    <property type="term" value="F:NADH dehydrogenase (ubiquinone) activity"/>
    <property type="evidence" value="ECO:0007669"/>
    <property type="project" value="InterPro"/>
</dbReference>
<dbReference type="GO" id="GO:0048038">
    <property type="term" value="F:quinone binding"/>
    <property type="evidence" value="ECO:0007669"/>
    <property type="project" value="UniProtKB-KW"/>
</dbReference>
<dbReference type="GO" id="GO:0019684">
    <property type="term" value="P:photosynthesis, light reaction"/>
    <property type="evidence" value="ECO:0007669"/>
    <property type="project" value="UniProtKB-UniRule"/>
</dbReference>
<dbReference type="Gene3D" id="1.20.58.1610">
    <property type="entry name" value="NADH:ubiquinone/plastoquinone oxidoreductase, chain 3"/>
    <property type="match status" value="1"/>
</dbReference>
<dbReference type="HAMAP" id="MF_01394">
    <property type="entry name" value="NDH1_NuoA"/>
    <property type="match status" value="1"/>
</dbReference>
<dbReference type="InterPro" id="IPR023043">
    <property type="entry name" value="NAD(P)H_OxRDtase_bac/plastid"/>
</dbReference>
<dbReference type="InterPro" id="IPR000440">
    <property type="entry name" value="NADH_UbQ/plastoQ_OxRdtase_su3"/>
</dbReference>
<dbReference type="InterPro" id="IPR038430">
    <property type="entry name" value="NDAH_ubi_oxred_su3_sf"/>
</dbReference>
<dbReference type="PANTHER" id="PTHR11058">
    <property type="entry name" value="NADH-UBIQUINONE OXIDOREDUCTASE CHAIN 3"/>
    <property type="match status" value="1"/>
</dbReference>
<dbReference type="PANTHER" id="PTHR11058:SF9">
    <property type="entry name" value="NADH-UBIQUINONE OXIDOREDUCTASE CHAIN 3"/>
    <property type="match status" value="1"/>
</dbReference>
<dbReference type="Pfam" id="PF00507">
    <property type="entry name" value="Oxidored_q4"/>
    <property type="match status" value="1"/>
</dbReference>